<organism>
    <name type="scientific">Neisseria meningitidis serogroup C (strain 053442)</name>
    <dbReference type="NCBI Taxonomy" id="374833"/>
    <lineage>
        <taxon>Bacteria</taxon>
        <taxon>Pseudomonadati</taxon>
        <taxon>Pseudomonadota</taxon>
        <taxon>Betaproteobacteria</taxon>
        <taxon>Neisseriales</taxon>
        <taxon>Neisseriaceae</taxon>
        <taxon>Neisseria</taxon>
    </lineage>
</organism>
<protein>
    <recommendedName>
        <fullName evidence="1">Pyridoxine/pyridoxamine 5'-phosphate oxidase</fullName>
        <ecNumber evidence="1">1.4.3.5</ecNumber>
    </recommendedName>
    <alternativeName>
        <fullName evidence="1">PNP/PMP oxidase</fullName>
        <shortName evidence="1">PNPOx</shortName>
    </alternativeName>
    <alternativeName>
        <fullName evidence="1">Pyridoxal 5'-phosphate synthase</fullName>
    </alternativeName>
</protein>
<reference key="1">
    <citation type="journal article" date="2008" name="Genomics">
        <title>Characterization of ST-4821 complex, a unique Neisseria meningitidis clone.</title>
        <authorList>
            <person name="Peng J."/>
            <person name="Yang L."/>
            <person name="Yang F."/>
            <person name="Yang J."/>
            <person name="Yan Y."/>
            <person name="Nie H."/>
            <person name="Zhang X."/>
            <person name="Xiong Z."/>
            <person name="Jiang Y."/>
            <person name="Cheng F."/>
            <person name="Xu X."/>
            <person name="Chen S."/>
            <person name="Sun L."/>
            <person name="Li W."/>
            <person name="Shen Y."/>
            <person name="Shao Z."/>
            <person name="Liang X."/>
            <person name="Xu J."/>
            <person name="Jin Q."/>
        </authorList>
    </citation>
    <scope>NUCLEOTIDE SEQUENCE [LARGE SCALE GENOMIC DNA]</scope>
    <source>
        <strain>053442</strain>
    </source>
</reference>
<dbReference type="EC" id="1.4.3.5" evidence="1"/>
<dbReference type="EMBL" id="CP000381">
    <property type="protein sequence ID" value="ABX73443.1"/>
    <property type="molecule type" value="Genomic_DNA"/>
</dbReference>
<dbReference type="RefSeq" id="WP_012221763.1">
    <property type="nucleotide sequence ID" value="NC_010120.1"/>
</dbReference>
<dbReference type="SMR" id="A9M007"/>
<dbReference type="KEGG" id="nmn:NMCC_1271"/>
<dbReference type="HOGENOM" id="CLU_032263_2_2_4"/>
<dbReference type="UniPathway" id="UPA01068">
    <property type="reaction ID" value="UER00304"/>
</dbReference>
<dbReference type="UniPathway" id="UPA01068">
    <property type="reaction ID" value="UER00305"/>
</dbReference>
<dbReference type="Proteomes" id="UP000001177">
    <property type="component" value="Chromosome"/>
</dbReference>
<dbReference type="GO" id="GO:0010181">
    <property type="term" value="F:FMN binding"/>
    <property type="evidence" value="ECO:0007669"/>
    <property type="project" value="UniProtKB-UniRule"/>
</dbReference>
<dbReference type="GO" id="GO:0004733">
    <property type="term" value="F:pyridoxamine phosphate oxidase activity"/>
    <property type="evidence" value="ECO:0007669"/>
    <property type="project" value="UniProtKB-UniRule"/>
</dbReference>
<dbReference type="GO" id="GO:0008615">
    <property type="term" value="P:pyridoxine biosynthetic process"/>
    <property type="evidence" value="ECO:0007669"/>
    <property type="project" value="UniProtKB-KW"/>
</dbReference>
<dbReference type="FunFam" id="2.30.110.10:FF:000014">
    <property type="entry name" value="Pyridoxine/pyridoxamine 5'-phosphate oxidase"/>
    <property type="match status" value="1"/>
</dbReference>
<dbReference type="Gene3D" id="2.30.110.10">
    <property type="entry name" value="Electron Transport, Fmn-binding Protein, Chain A"/>
    <property type="match status" value="1"/>
</dbReference>
<dbReference type="HAMAP" id="MF_01629">
    <property type="entry name" value="PdxH"/>
    <property type="match status" value="1"/>
</dbReference>
<dbReference type="InterPro" id="IPR000659">
    <property type="entry name" value="Pyridox_Oxase"/>
</dbReference>
<dbReference type="InterPro" id="IPR019740">
    <property type="entry name" value="Pyridox_Oxase_CS"/>
</dbReference>
<dbReference type="InterPro" id="IPR011576">
    <property type="entry name" value="Pyridox_Oxase_N"/>
</dbReference>
<dbReference type="InterPro" id="IPR019576">
    <property type="entry name" value="Pyridoxamine_oxidase_dimer_C"/>
</dbReference>
<dbReference type="InterPro" id="IPR012349">
    <property type="entry name" value="Split_barrel_FMN-bd"/>
</dbReference>
<dbReference type="NCBIfam" id="TIGR00558">
    <property type="entry name" value="pdxH"/>
    <property type="match status" value="1"/>
</dbReference>
<dbReference type="NCBIfam" id="NF004231">
    <property type="entry name" value="PRK05679.1"/>
    <property type="match status" value="1"/>
</dbReference>
<dbReference type="PANTHER" id="PTHR10851:SF0">
    <property type="entry name" value="PYRIDOXINE-5'-PHOSPHATE OXIDASE"/>
    <property type="match status" value="1"/>
</dbReference>
<dbReference type="PANTHER" id="PTHR10851">
    <property type="entry name" value="PYRIDOXINE-5-PHOSPHATE OXIDASE"/>
    <property type="match status" value="1"/>
</dbReference>
<dbReference type="Pfam" id="PF10590">
    <property type="entry name" value="PNP_phzG_C"/>
    <property type="match status" value="1"/>
</dbReference>
<dbReference type="Pfam" id="PF01243">
    <property type="entry name" value="PNPOx_N"/>
    <property type="match status" value="1"/>
</dbReference>
<dbReference type="PIRSF" id="PIRSF000190">
    <property type="entry name" value="Pyd_amn-ph_oxd"/>
    <property type="match status" value="1"/>
</dbReference>
<dbReference type="SUPFAM" id="SSF50475">
    <property type="entry name" value="FMN-binding split barrel"/>
    <property type="match status" value="1"/>
</dbReference>
<dbReference type="PROSITE" id="PS01064">
    <property type="entry name" value="PYRIDOX_OXIDASE"/>
    <property type="match status" value="1"/>
</dbReference>
<sequence length="210" mass="24202">MDLHNIREDYSKRELSEGDCADNPIEQFERWLDEAVRAEVNEPTAVNVAAVDGRGRPNSRMVLLKEVNSEGFVFFTNYHSRKGRSLDAHPFAAMTFFWPELERQVRVEGRVERLAEKLSDEYFESRPYQSRLGAWASAQSEVIPNKAVLVAKAAAVGLKHPLHVPRPPHWGGYIVIPDLLEFWQGRPSRLHDRIQYRLLDGGWIRERLSP</sequence>
<proteinExistence type="inferred from homology"/>
<feature type="chain" id="PRO_1000186321" description="Pyridoxine/pyridoxamine 5'-phosphate oxidase">
    <location>
        <begin position="1"/>
        <end position="210"/>
    </location>
</feature>
<feature type="binding site" evidence="1">
    <location>
        <begin position="7"/>
        <end position="10"/>
    </location>
    <ligand>
        <name>substrate</name>
    </ligand>
</feature>
<feature type="binding site" evidence="1">
    <location>
        <begin position="60"/>
        <end position="65"/>
    </location>
    <ligand>
        <name>FMN</name>
        <dbReference type="ChEBI" id="CHEBI:58210"/>
    </ligand>
</feature>
<feature type="binding site" evidence="1">
    <location>
        <position position="65"/>
    </location>
    <ligand>
        <name>substrate</name>
    </ligand>
</feature>
<feature type="binding site" evidence="1">
    <location>
        <begin position="75"/>
        <end position="76"/>
    </location>
    <ligand>
        <name>FMN</name>
        <dbReference type="ChEBI" id="CHEBI:58210"/>
    </ligand>
</feature>
<feature type="binding site" evidence="1">
    <location>
        <position position="81"/>
    </location>
    <ligand>
        <name>FMN</name>
        <dbReference type="ChEBI" id="CHEBI:58210"/>
    </ligand>
</feature>
<feature type="binding site" evidence="1">
    <location>
        <position position="82"/>
    </location>
    <ligand>
        <name>FMN</name>
        <dbReference type="ChEBI" id="CHEBI:58210"/>
    </ligand>
</feature>
<feature type="binding site" evidence="1">
    <location>
        <position position="104"/>
    </location>
    <ligand>
        <name>FMN</name>
        <dbReference type="ChEBI" id="CHEBI:58210"/>
    </ligand>
</feature>
<feature type="binding site" evidence="1">
    <location>
        <position position="122"/>
    </location>
    <ligand>
        <name>substrate</name>
    </ligand>
</feature>
<feature type="binding site" evidence="1">
    <location>
        <position position="126"/>
    </location>
    <ligand>
        <name>substrate</name>
    </ligand>
</feature>
<feature type="binding site" evidence="1">
    <location>
        <position position="130"/>
    </location>
    <ligand>
        <name>substrate</name>
    </ligand>
</feature>
<feature type="binding site" evidence="1">
    <location>
        <begin position="139"/>
        <end position="140"/>
    </location>
    <ligand>
        <name>FMN</name>
        <dbReference type="ChEBI" id="CHEBI:58210"/>
    </ligand>
</feature>
<feature type="binding site" evidence="1">
    <location>
        <position position="183"/>
    </location>
    <ligand>
        <name>FMN</name>
        <dbReference type="ChEBI" id="CHEBI:58210"/>
    </ligand>
</feature>
<feature type="binding site" evidence="1">
    <location>
        <begin position="189"/>
        <end position="191"/>
    </location>
    <ligand>
        <name>substrate</name>
    </ligand>
</feature>
<feature type="binding site" evidence="1">
    <location>
        <position position="193"/>
    </location>
    <ligand>
        <name>FMN</name>
        <dbReference type="ChEBI" id="CHEBI:58210"/>
    </ligand>
</feature>
<comment type="function">
    <text evidence="1">Catalyzes the oxidation of either pyridoxine 5'-phosphate (PNP) or pyridoxamine 5'-phosphate (PMP) into pyridoxal 5'-phosphate (PLP).</text>
</comment>
<comment type="catalytic activity">
    <reaction evidence="1">
        <text>pyridoxamine 5'-phosphate + O2 + H2O = pyridoxal 5'-phosphate + H2O2 + NH4(+)</text>
        <dbReference type="Rhea" id="RHEA:15817"/>
        <dbReference type="ChEBI" id="CHEBI:15377"/>
        <dbReference type="ChEBI" id="CHEBI:15379"/>
        <dbReference type="ChEBI" id="CHEBI:16240"/>
        <dbReference type="ChEBI" id="CHEBI:28938"/>
        <dbReference type="ChEBI" id="CHEBI:58451"/>
        <dbReference type="ChEBI" id="CHEBI:597326"/>
        <dbReference type="EC" id="1.4.3.5"/>
    </reaction>
</comment>
<comment type="catalytic activity">
    <reaction evidence="1">
        <text>pyridoxine 5'-phosphate + O2 = pyridoxal 5'-phosphate + H2O2</text>
        <dbReference type="Rhea" id="RHEA:15149"/>
        <dbReference type="ChEBI" id="CHEBI:15379"/>
        <dbReference type="ChEBI" id="CHEBI:16240"/>
        <dbReference type="ChEBI" id="CHEBI:58589"/>
        <dbReference type="ChEBI" id="CHEBI:597326"/>
        <dbReference type="EC" id="1.4.3.5"/>
    </reaction>
</comment>
<comment type="cofactor">
    <cofactor evidence="1">
        <name>FMN</name>
        <dbReference type="ChEBI" id="CHEBI:58210"/>
    </cofactor>
    <text evidence="1">Binds 1 FMN per subunit.</text>
</comment>
<comment type="pathway">
    <text evidence="1">Cofactor metabolism; pyridoxal 5'-phosphate salvage; pyridoxal 5'-phosphate from pyridoxamine 5'-phosphate: step 1/1.</text>
</comment>
<comment type="pathway">
    <text evidence="1">Cofactor metabolism; pyridoxal 5'-phosphate salvage; pyridoxal 5'-phosphate from pyridoxine 5'-phosphate: step 1/1.</text>
</comment>
<comment type="subunit">
    <text evidence="1">Homodimer.</text>
</comment>
<comment type="similarity">
    <text evidence="1">Belongs to the pyridoxamine 5'-phosphate oxidase family.</text>
</comment>
<name>PDXH_NEIM0</name>
<evidence type="ECO:0000255" key="1">
    <source>
        <dbReference type="HAMAP-Rule" id="MF_01629"/>
    </source>
</evidence>
<gene>
    <name evidence="1" type="primary">pdxH</name>
    <name type="ordered locus">NMCC_1271</name>
</gene>
<keyword id="KW-0285">Flavoprotein</keyword>
<keyword id="KW-0288">FMN</keyword>
<keyword id="KW-0560">Oxidoreductase</keyword>
<keyword id="KW-0664">Pyridoxine biosynthesis</keyword>
<accession>A9M007</accession>